<name>AIM21_YEAS1</name>
<evidence type="ECO:0000250" key="1"/>
<evidence type="ECO:0000250" key="2">
    <source>
        <dbReference type="UniProtKB" id="P40563"/>
    </source>
</evidence>
<evidence type="ECO:0000256" key="3">
    <source>
        <dbReference type="SAM" id="MobiDB-lite"/>
    </source>
</evidence>
<evidence type="ECO:0000305" key="4"/>
<proteinExistence type="inferred from homology"/>
<reference key="1">
    <citation type="submission" date="2005-03" db="EMBL/GenBank/DDBJ databases">
        <title>Annotation of the Saccharomyces cerevisiae RM11-1a genome.</title>
        <authorList>
            <consortium name="The Broad Institute Genome Sequencing Platform"/>
            <person name="Birren B.W."/>
            <person name="Lander E.S."/>
            <person name="Galagan J.E."/>
            <person name="Nusbaum C."/>
            <person name="Devon K."/>
            <person name="Cuomo C."/>
            <person name="Jaffe D.B."/>
            <person name="Butler J."/>
            <person name="Alvarez P."/>
            <person name="Gnerre S."/>
            <person name="Grabherr M."/>
            <person name="Kleber M."/>
            <person name="Mauceli E.W."/>
            <person name="Brockman W."/>
            <person name="MacCallum I.A."/>
            <person name="Rounsley S."/>
            <person name="Young S.K."/>
            <person name="LaButti K."/>
            <person name="Pushparaj V."/>
            <person name="DeCaprio D."/>
            <person name="Crawford M."/>
            <person name="Koehrsen M."/>
            <person name="Engels R."/>
            <person name="Montgomery P."/>
            <person name="Pearson M."/>
            <person name="Howarth C."/>
            <person name="Larson L."/>
            <person name="Luoma S."/>
            <person name="White J."/>
            <person name="O'Leary S."/>
            <person name="Kodira C.D."/>
            <person name="Zeng Q."/>
            <person name="Yandava C."/>
            <person name="Alvarado L."/>
            <person name="Pratt S."/>
            <person name="Kruglyak L."/>
        </authorList>
    </citation>
    <scope>NUCLEOTIDE SEQUENCE [LARGE SCALE GENOMIC DNA]</scope>
    <source>
        <strain>RM11-1a</strain>
    </source>
</reference>
<dbReference type="EMBL" id="CH408055">
    <property type="protein sequence ID" value="EDV09487.1"/>
    <property type="molecule type" value="Genomic_DNA"/>
</dbReference>
<dbReference type="HOGENOM" id="CLU_418608_0_0_1"/>
<dbReference type="OrthoDB" id="8332at4893"/>
<dbReference type="Proteomes" id="UP000008335">
    <property type="component" value="Unassembled WGS sequence"/>
</dbReference>
<dbReference type="GO" id="GO:0030479">
    <property type="term" value="C:actin cortical patch"/>
    <property type="evidence" value="ECO:0007669"/>
    <property type="project" value="UniProtKB-SubCell"/>
</dbReference>
<dbReference type="InterPro" id="IPR021582">
    <property type="entry name" value="Aim21"/>
</dbReference>
<dbReference type="Pfam" id="PF11489">
    <property type="entry name" value="Aim21"/>
    <property type="match status" value="1"/>
</dbReference>
<comment type="function">
    <text evidence="1">Involved in mitochondrial migration along actin filaments.</text>
</comment>
<comment type="subunit">
    <text evidence="1">Interacts with ribosomes. Interacts with ABP1.</text>
</comment>
<comment type="subcellular location">
    <subcellularLocation>
        <location evidence="1">Cytoplasm</location>
        <location evidence="1">Cytoskeleton</location>
        <location evidence="1">Actin patch</location>
    </subcellularLocation>
    <text evidence="1">Cortical actin patches. Localizes at the shmoo tip.</text>
</comment>
<comment type="similarity">
    <text evidence="4">Belongs to the AIM21 family.</text>
</comment>
<gene>
    <name type="primary">AIM21</name>
    <name type="ORF">SCRG_05176</name>
</gene>
<organism>
    <name type="scientific">Saccharomyces cerevisiae (strain RM11-1a)</name>
    <name type="common">Baker's yeast</name>
    <dbReference type="NCBI Taxonomy" id="285006"/>
    <lineage>
        <taxon>Eukaryota</taxon>
        <taxon>Fungi</taxon>
        <taxon>Dikarya</taxon>
        <taxon>Ascomycota</taxon>
        <taxon>Saccharomycotina</taxon>
        <taxon>Saccharomycetes</taxon>
        <taxon>Saccharomycetales</taxon>
        <taxon>Saccharomycetaceae</taxon>
        <taxon>Saccharomyces</taxon>
    </lineage>
</organism>
<feature type="chain" id="PRO_0000399524" description="Altered inheritance of mitochondria protein 21">
    <location>
        <begin position="1"/>
        <end position="651"/>
    </location>
</feature>
<feature type="region of interest" description="Disordered" evidence="3">
    <location>
        <begin position="1"/>
        <end position="85"/>
    </location>
</feature>
<feature type="region of interest" description="Disordered" evidence="3">
    <location>
        <begin position="110"/>
        <end position="522"/>
    </location>
</feature>
<feature type="region of interest" description="Interaction with SH3 domain of ABP1" evidence="1">
    <location>
        <begin position="383"/>
        <end position="396"/>
    </location>
</feature>
<feature type="region of interest" description="Disordered" evidence="3">
    <location>
        <begin position="549"/>
        <end position="651"/>
    </location>
</feature>
<feature type="compositionally biased region" description="Basic and acidic residues" evidence="3">
    <location>
        <begin position="9"/>
        <end position="19"/>
    </location>
</feature>
<feature type="compositionally biased region" description="Basic residues" evidence="3">
    <location>
        <begin position="110"/>
        <end position="119"/>
    </location>
</feature>
<feature type="compositionally biased region" description="Polar residues" evidence="3">
    <location>
        <begin position="133"/>
        <end position="149"/>
    </location>
</feature>
<feature type="compositionally biased region" description="Polar residues" evidence="3">
    <location>
        <begin position="164"/>
        <end position="178"/>
    </location>
</feature>
<feature type="compositionally biased region" description="Basic and acidic residues" evidence="3">
    <location>
        <begin position="179"/>
        <end position="213"/>
    </location>
</feature>
<feature type="compositionally biased region" description="Basic and acidic residues" evidence="3">
    <location>
        <begin position="243"/>
        <end position="272"/>
    </location>
</feature>
<feature type="compositionally biased region" description="Polar residues" evidence="3">
    <location>
        <begin position="296"/>
        <end position="323"/>
    </location>
</feature>
<feature type="compositionally biased region" description="Basic and acidic residues" evidence="3">
    <location>
        <begin position="339"/>
        <end position="361"/>
    </location>
</feature>
<feature type="compositionally biased region" description="Basic and acidic residues" evidence="3">
    <location>
        <begin position="372"/>
        <end position="383"/>
    </location>
</feature>
<feature type="compositionally biased region" description="Polar residues" evidence="3">
    <location>
        <begin position="414"/>
        <end position="427"/>
    </location>
</feature>
<feature type="compositionally biased region" description="Polar residues" evidence="3">
    <location>
        <begin position="437"/>
        <end position="452"/>
    </location>
</feature>
<feature type="compositionally biased region" description="Basic and acidic residues" evidence="3">
    <location>
        <begin position="471"/>
        <end position="482"/>
    </location>
</feature>
<feature type="compositionally biased region" description="Basic residues" evidence="3">
    <location>
        <begin position="501"/>
        <end position="512"/>
    </location>
</feature>
<feature type="compositionally biased region" description="Basic and acidic residues" evidence="3">
    <location>
        <begin position="556"/>
        <end position="567"/>
    </location>
</feature>
<feature type="compositionally biased region" description="Polar residues" evidence="3">
    <location>
        <begin position="575"/>
        <end position="586"/>
    </location>
</feature>
<feature type="compositionally biased region" description="Polar residues" evidence="3">
    <location>
        <begin position="594"/>
        <end position="605"/>
    </location>
</feature>
<feature type="compositionally biased region" description="Basic and acidic residues" evidence="3">
    <location>
        <begin position="639"/>
        <end position="651"/>
    </location>
</feature>
<feature type="modified residue" description="Phosphothreonine" evidence="2">
    <location>
        <position position="18"/>
    </location>
</feature>
<feature type="modified residue" description="Phosphoserine" evidence="2">
    <location>
        <position position="36"/>
    </location>
</feature>
<feature type="modified residue" description="Phosphothreonine" evidence="2">
    <location>
        <position position="58"/>
    </location>
</feature>
<feature type="modified residue" description="Phosphoserine" evidence="2">
    <location>
        <position position="70"/>
    </location>
</feature>
<feature type="modified residue" description="Phosphothreonine" evidence="2">
    <location>
        <position position="85"/>
    </location>
</feature>
<feature type="modified residue" description="Phosphoserine" evidence="2">
    <location>
        <position position="104"/>
    </location>
</feature>
<feature type="modified residue" description="Phosphoserine" evidence="2">
    <location>
        <position position="183"/>
    </location>
</feature>
<feature type="modified residue" description="Phosphoserine" evidence="2">
    <location>
        <position position="206"/>
    </location>
</feature>
<feature type="modified residue" description="Phosphoserine" evidence="2">
    <location>
        <position position="231"/>
    </location>
</feature>
<feature type="modified residue" description="Phosphothreonine" evidence="2">
    <location>
        <position position="277"/>
    </location>
</feature>
<feature type="modified residue" description="Phosphoserine" evidence="2">
    <location>
        <position position="284"/>
    </location>
</feature>
<feature type="modified residue" description="Phosphoserine" evidence="2">
    <location>
        <position position="324"/>
    </location>
</feature>
<feature type="modified residue" description="Phosphothreonine" evidence="2">
    <location>
        <position position="552"/>
    </location>
</feature>
<feature type="modified residue" description="Phosphoserine" evidence="2">
    <location>
        <position position="592"/>
    </location>
</feature>
<feature type="modified residue" description="Phosphoserine" evidence="2">
    <location>
        <position position="595"/>
    </location>
</feature>
<feature type="modified residue" description="Phosphoserine" evidence="2">
    <location>
        <position position="597"/>
    </location>
</feature>
<feature type="modified residue" description="Phosphoserine" evidence="2">
    <location>
        <position position="599"/>
    </location>
</feature>
<feature type="modified residue" description="Phosphoserine" evidence="2">
    <location>
        <position position="639"/>
    </location>
</feature>
<feature type="modified residue" description="Phosphoserine" evidence="2">
    <location>
        <position position="643"/>
    </location>
</feature>
<feature type="modified residue" description="Phosphoserine" evidence="2">
    <location>
        <position position="647"/>
    </location>
</feature>
<feature type="modified residue" description="Phosphoserine" evidence="2">
    <location>
        <position position="650"/>
    </location>
</feature>
<accession>B3LTK6</accession>
<sequence length="651" mass="71620">MPSEVTPKVPERPSRRKTSELFPLSGSESGDIKANSEPPTPAGTPNVPTRRPILKAKTMTSFESGMDQESLPKVPLQRPVRRSTTEELNNVMNNTSKELEEIESLISKHNIHNVSRKKSPTSVEEGKVAAIHQNGQRSASDNKTSTNPSPLEKNEHEGAEGNESAISPSNLVNKSNNEVTEHSDSEDLTEKQKVHAALDNEAGDRSHFEEKLIPGDMKVQVDVSKDVEEGSLNALPPSGITESDDKAEKFTKHPESSLEELQKHQEQQEEKIFQNPTDEESTTSLNEKQEGKDNMEVNSQPQGPSDTETVIAATSSNVPSQIASEEENDVPVIPRSRPKKDFEAHVQKEELPNTQEKRVSEECDSTLISTEEESKIPKIPSERPKRRAPPPVPKKPSSRIAAFQEMLQKQQQQDLHNNGNSSATTASADIAKKHTDSSITSDTTKADFTSKLNGLFALPGMVNPGQLPPSLEKKLSSPDTESKLGPQDQSQAKTGPLGGTRRGRGPRGRKLPSKVASVEKIEEDDNTNKIEIFNNWNVSSSFSKEKVLIDTTPGEQAERALDEKEKLPANAESDPLSQLPQTNTVGNRKAISEESLSPSEAITNRDQNDTTEIQEQQMEEQMEVDMERELSGGYEDVDSALHSEEASFHSL</sequence>
<keyword id="KW-0963">Cytoplasm</keyword>
<keyword id="KW-0206">Cytoskeleton</keyword>
<keyword id="KW-0597">Phosphoprotein</keyword>
<protein>
    <recommendedName>
        <fullName>Altered inheritance of mitochondria protein 21</fullName>
    </recommendedName>
</protein>